<dbReference type="EC" id="1.14.99.56" evidence="6 7"/>
<dbReference type="EMBL" id="CM002237">
    <property type="protein sequence ID" value="EAA26656.1"/>
    <property type="molecule type" value="Genomic_DNA"/>
</dbReference>
<dbReference type="RefSeq" id="XP_955892.1">
    <property type="nucleotide sequence ID" value="XM_950799.3"/>
</dbReference>
<dbReference type="PDB" id="4QI8">
    <property type="method" value="X-ray"/>
    <property type="resolution" value="1.10 A"/>
    <property type="chains" value="A/B=18-231"/>
</dbReference>
<dbReference type="PDBsum" id="4QI8"/>
<dbReference type="SMR" id="Q1K4Q1"/>
<dbReference type="STRING" id="367110.Q1K4Q1"/>
<dbReference type="CAZy" id="AA9">
    <property type="family name" value="Auxiliary Activities 9"/>
</dbReference>
<dbReference type="PaxDb" id="5141-EFNCRP00000002577"/>
<dbReference type="EnsemblFungi" id="EAA26656">
    <property type="protein sequence ID" value="EAA26656"/>
    <property type="gene ID" value="NCU03328"/>
</dbReference>
<dbReference type="GeneID" id="3872039"/>
<dbReference type="KEGG" id="ncr:NCU03328"/>
<dbReference type="VEuPathDB" id="FungiDB:NCU03328"/>
<dbReference type="HOGENOM" id="CLU_031730_4_2_1"/>
<dbReference type="InParanoid" id="Q1K4Q1"/>
<dbReference type="OMA" id="LMRNEHI"/>
<dbReference type="OrthoDB" id="5271017at2759"/>
<dbReference type="BRENDA" id="1.14.99.54">
    <property type="organism ID" value="3627"/>
</dbReference>
<dbReference type="EvolutionaryTrace" id="Q1K4Q1"/>
<dbReference type="Proteomes" id="UP000001805">
    <property type="component" value="Chromosome 6, Linkage Group II"/>
</dbReference>
<dbReference type="GO" id="GO:0005576">
    <property type="term" value="C:extracellular region"/>
    <property type="evidence" value="ECO:0007669"/>
    <property type="project" value="UniProtKB-SubCell"/>
</dbReference>
<dbReference type="GO" id="GO:0046872">
    <property type="term" value="F:metal ion binding"/>
    <property type="evidence" value="ECO:0007669"/>
    <property type="project" value="UniProtKB-KW"/>
</dbReference>
<dbReference type="GO" id="GO:0004497">
    <property type="term" value="F:monooxygenase activity"/>
    <property type="evidence" value="ECO:0007669"/>
    <property type="project" value="UniProtKB-KW"/>
</dbReference>
<dbReference type="GO" id="GO:0030245">
    <property type="term" value="P:cellulose catabolic process"/>
    <property type="evidence" value="ECO:0007669"/>
    <property type="project" value="UniProtKB-KW"/>
</dbReference>
<dbReference type="CDD" id="cd21175">
    <property type="entry name" value="LPMO_AA9"/>
    <property type="match status" value="1"/>
</dbReference>
<dbReference type="Gene3D" id="2.70.50.70">
    <property type="match status" value="1"/>
</dbReference>
<dbReference type="InterPro" id="IPR049892">
    <property type="entry name" value="AA9"/>
</dbReference>
<dbReference type="InterPro" id="IPR005103">
    <property type="entry name" value="AA9_LPMO"/>
</dbReference>
<dbReference type="PANTHER" id="PTHR33353:SF3">
    <property type="entry name" value="ENDOGLUCANASE II"/>
    <property type="match status" value="1"/>
</dbReference>
<dbReference type="PANTHER" id="PTHR33353">
    <property type="entry name" value="PUTATIVE (AFU_ORTHOLOGUE AFUA_1G12560)-RELATED"/>
    <property type="match status" value="1"/>
</dbReference>
<dbReference type="Pfam" id="PF03443">
    <property type="entry name" value="AA9"/>
    <property type="match status" value="1"/>
</dbReference>
<evidence type="ECO:0000250" key="1">
    <source>
        <dbReference type="UniProtKB" id="Q1K8B6"/>
    </source>
</evidence>
<evidence type="ECO:0000250" key="2">
    <source>
        <dbReference type="UniProtKB" id="Q7SHI8"/>
    </source>
</evidence>
<evidence type="ECO:0000255" key="3"/>
<evidence type="ECO:0000269" key="4">
    <source>
    </source>
</evidence>
<evidence type="ECO:0000269" key="5">
    <source>
    </source>
</evidence>
<evidence type="ECO:0000269" key="6">
    <source>
    </source>
</evidence>
<evidence type="ECO:0000269" key="7">
    <source>
    </source>
</evidence>
<evidence type="ECO:0000303" key="8">
    <source>
    </source>
</evidence>
<evidence type="ECO:0000303" key="9">
    <source>
    </source>
</evidence>
<evidence type="ECO:0000305" key="10"/>
<evidence type="ECO:0007744" key="11">
    <source>
        <dbReference type="PDB" id="4QI8"/>
    </source>
</evidence>
<evidence type="ECO:0007829" key="12">
    <source>
        <dbReference type="PDB" id="4QI8"/>
    </source>
</evidence>
<accession>Q1K4Q1</accession>
<organism>
    <name type="scientific">Neurospora crassa (strain ATCC 24698 / 74-OR23-1A / CBS 708.71 / DSM 1257 / FGSC 987)</name>
    <dbReference type="NCBI Taxonomy" id="367110"/>
    <lineage>
        <taxon>Eukaryota</taxon>
        <taxon>Fungi</taxon>
        <taxon>Dikarya</taxon>
        <taxon>Ascomycota</taxon>
        <taxon>Pezizomycotina</taxon>
        <taxon>Sordariomycetes</taxon>
        <taxon>Sordariomycetidae</taxon>
        <taxon>Sordariales</taxon>
        <taxon>Sordariaceae</taxon>
        <taxon>Neurospora</taxon>
    </lineage>
</organism>
<feature type="signal peptide" evidence="3">
    <location>
        <begin position="1"/>
        <end position="17"/>
    </location>
</feature>
<feature type="chain" id="PRO_5004192743" description="AA9 family lytic polysaccharide monooxygenase F">
    <location>
        <begin position="18"/>
        <end position="231"/>
    </location>
</feature>
<feature type="binding site" evidence="5 11">
    <location>
        <position position="18"/>
    </location>
    <ligand>
        <name>Cu(2+)</name>
        <dbReference type="ChEBI" id="CHEBI:29036"/>
    </ligand>
</feature>
<feature type="binding site" evidence="5 11">
    <location>
        <position position="50"/>
    </location>
    <ligand>
        <name>Cu(2+)</name>
        <dbReference type="ChEBI" id="CHEBI:29036"/>
    </ligand>
</feature>
<feature type="binding site" evidence="1">
    <location>
        <position position="50"/>
    </location>
    <ligand>
        <name>O2</name>
        <dbReference type="ChEBI" id="CHEBI:15379"/>
    </ligand>
</feature>
<feature type="binding site" evidence="5 11">
    <location>
        <position position="89"/>
    </location>
    <ligand>
        <name>Cu(2+)</name>
        <dbReference type="ChEBI" id="CHEBI:29036"/>
    </ligand>
</feature>
<feature type="binding site" evidence="1">
    <location>
        <position position="163"/>
    </location>
    <ligand>
        <name>O2</name>
        <dbReference type="ChEBI" id="CHEBI:15379"/>
    </ligand>
</feature>
<feature type="binding site" evidence="1">
    <location>
        <position position="172"/>
    </location>
    <ligand>
        <name>O2</name>
        <dbReference type="ChEBI" id="CHEBI:15379"/>
    </ligand>
</feature>
<feature type="binding site" evidence="5 11">
    <location>
        <position position="174"/>
    </location>
    <ligand>
        <name>Cu(2+)</name>
        <dbReference type="ChEBI" id="CHEBI:29036"/>
    </ligand>
</feature>
<feature type="disulfide bond" evidence="5 11">
    <location>
        <begin position="59"/>
        <end position="177"/>
    </location>
</feature>
<feature type="disulfide bond" evidence="5 11">
    <location>
        <begin position="147"/>
        <end position="231"/>
    </location>
</feature>
<feature type="strand" evidence="12">
    <location>
        <begin position="20"/>
        <end position="25"/>
    </location>
</feature>
<feature type="strand" evidence="12">
    <location>
        <begin position="35"/>
        <end position="37"/>
    </location>
</feature>
<feature type="turn" evidence="12">
    <location>
        <begin position="41"/>
        <end position="45"/>
    </location>
</feature>
<feature type="helix" evidence="12">
    <location>
        <begin position="56"/>
        <end position="59"/>
    </location>
</feature>
<feature type="strand" evidence="12">
    <location>
        <begin position="71"/>
        <end position="74"/>
    </location>
</feature>
<feature type="strand" evidence="12">
    <location>
        <begin position="78"/>
        <end position="85"/>
    </location>
</feature>
<feature type="strand" evidence="12">
    <location>
        <begin position="89"/>
        <end position="91"/>
    </location>
</feature>
<feature type="strand" evidence="12">
    <location>
        <begin position="93"/>
        <end position="99"/>
    </location>
</feature>
<feature type="helix" evidence="12">
    <location>
        <begin position="106"/>
        <end position="108"/>
    </location>
</feature>
<feature type="strand" evidence="12">
    <location>
        <begin position="116"/>
        <end position="121"/>
    </location>
</feature>
<feature type="strand" evidence="12">
    <location>
        <begin position="125"/>
        <end position="131"/>
    </location>
</feature>
<feature type="turn" evidence="12">
    <location>
        <begin position="133"/>
        <end position="136"/>
    </location>
</feature>
<feature type="strand" evidence="12">
    <location>
        <begin position="138"/>
        <end position="143"/>
    </location>
</feature>
<feature type="strand" evidence="12">
    <location>
        <begin position="146"/>
        <end position="148"/>
    </location>
</feature>
<feature type="strand" evidence="12">
    <location>
        <begin position="151"/>
        <end position="161"/>
    </location>
</feature>
<feature type="turn" evidence="12">
    <location>
        <begin position="163"/>
        <end position="166"/>
    </location>
</feature>
<feature type="strand" evidence="12">
    <location>
        <begin position="172"/>
        <end position="184"/>
    </location>
</feature>
<feature type="helix" evidence="12">
    <location>
        <begin position="192"/>
        <end position="194"/>
    </location>
</feature>
<feature type="turn" evidence="12">
    <location>
        <begin position="198"/>
        <end position="200"/>
    </location>
</feature>
<feature type="turn" evidence="12">
    <location>
        <begin position="207"/>
        <end position="209"/>
    </location>
</feature>
<feature type="strand" evidence="12">
    <location>
        <begin position="214"/>
        <end position="216"/>
    </location>
</feature>
<feature type="strand" evidence="12">
    <location>
        <begin position="224"/>
        <end position="226"/>
    </location>
</feature>
<comment type="function">
    <text evidence="2 4 6 7">Lytic polysaccharide monooxygenase (LPMO) that depolymerizes crystalline and amorphous polysaccharides via the oxidation of scissile alpha- or beta-(1-4)-glycosidic bonds, yielding C1 oxidation products (PubMed:23102010, PubMed:31835532, PubMed:35080911). Catalysis by LPMOs requires the reduction of the active-site copper from Cu(II) to Cu(I) by a reducing agent and H(2)O(2) or O(2) as a cosubstrate (By similarity).</text>
</comment>
<comment type="catalytic activity">
    <reaction evidence="6 7">
        <text>[(1-&gt;4)-beta-D-glucosyl]n+m + reduced acceptor + O2 = 4-dehydro-beta-D-glucosyl-[(1-&gt;4)-beta-D-glucosyl]n-1 + [(1-&gt;4)-beta-D-glucosyl]m + acceptor + H2O.</text>
        <dbReference type="EC" id="1.14.99.56"/>
    </reaction>
</comment>
<comment type="cofactor">
    <cofactor evidence="5">
        <name>Cu(2+)</name>
        <dbReference type="ChEBI" id="CHEBI:29036"/>
    </cofactor>
    <text evidence="5">Binds 1 copper ion per subunit.</text>
</comment>
<comment type="subcellular location">
    <subcellularLocation>
        <location evidence="4">Secreted</location>
    </subcellularLocation>
</comment>
<comment type="biotechnology">
    <text evidence="2">Lignocellulose is the most abundant polymeric composite on Earth and is a recalcitrant but promising renewable substrate for industrial biotechnology applications. Together with cellobiose dehydrogenases (CDHs) an enzymatic system capable of oxidative cellulose cleavage is formed, which increases the efficiency of cellulases and put LPMOs at focus of biofuel research.</text>
</comment>
<comment type="similarity">
    <text evidence="10">Belongs to the polysaccharide monooxygenase AA9 family.</text>
</comment>
<proteinExistence type="evidence at protein level"/>
<protein>
    <recommendedName>
        <fullName evidence="9">AA9 family lytic polysaccharide monooxygenase F</fullName>
        <shortName evidence="9">LPMO9F</shortName>
        <ecNumber evidence="6 7">1.14.99.56</ecNumber>
    </recommendedName>
    <alternativeName>
        <fullName evidence="10">Endo-1,4-beta-glucanase LPMO9F</fullName>
        <shortName evidence="10">Endoglucanase LPMO9F</shortName>
    </alternativeName>
    <alternativeName>
        <fullName evidence="10">Glycosyl hydrolase 61 family protein 6</fullName>
    </alternativeName>
</protein>
<gene>
    <name type="primary">gh61-6</name>
    <name evidence="9" type="synonym">LPMO9F</name>
    <name evidence="8" type="synonym">PMO-0332</name>
    <name type="ORF">NCU03328</name>
</gene>
<keyword id="KW-0002">3D-structure</keyword>
<keyword id="KW-0119">Carbohydrate metabolism</keyword>
<keyword id="KW-0136">Cellulose degradation</keyword>
<keyword id="KW-0186">Copper</keyword>
<keyword id="KW-1015">Disulfide bond</keyword>
<keyword id="KW-0479">Metal-binding</keyword>
<keyword id="KW-0503">Monooxygenase</keyword>
<keyword id="KW-0560">Oxidoreductase</keyword>
<keyword id="KW-0624">Polysaccharide degradation</keyword>
<keyword id="KW-1185">Reference proteome</keyword>
<keyword id="KW-0964">Secreted</keyword>
<keyword id="KW-0732">Signal</keyword>
<sequence>MLPSISLLLAAALGTSAHYTFPKVWANSGTTADWQYVRRADNWQNNGFVDNVNSQQIRCFQSTHSPAQSTLSVAAGTTITYGAAPSVYHPGPMQFYLARVPDGQDINSWTGEGAVWFKIYHEQPTFGSQLTWSSNGKSSFPVKIPSCIKSGSYLLRAEHIGLHVAQSSGAAQFYISCAQLSITGGGSTEPGANYKVSFPGAYKASDPGILININYPVPTSYKNPGPSVFTC</sequence>
<name>LP9F_NEUCR</name>
<reference key="1">
    <citation type="journal article" date="2003" name="Nature">
        <title>The genome sequence of the filamentous fungus Neurospora crassa.</title>
        <authorList>
            <person name="Galagan J.E."/>
            <person name="Calvo S.E."/>
            <person name="Borkovich K.A."/>
            <person name="Selker E.U."/>
            <person name="Read N.D."/>
            <person name="Jaffe D.B."/>
            <person name="FitzHugh W."/>
            <person name="Ma L.-J."/>
            <person name="Smirnov S."/>
            <person name="Purcell S."/>
            <person name="Rehman B."/>
            <person name="Elkins T."/>
            <person name="Engels R."/>
            <person name="Wang S."/>
            <person name="Nielsen C.B."/>
            <person name="Butler J."/>
            <person name="Endrizzi M."/>
            <person name="Qui D."/>
            <person name="Ianakiev P."/>
            <person name="Bell-Pedersen D."/>
            <person name="Nelson M.A."/>
            <person name="Werner-Washburne M."/>
            <person name="Selitrennikoff C.P."/>
            <person name="Kinsey J.A."/>
            <person name="Braun E.L."/>
            <person name="Zelter A."/>
            <person name="Schulte U."/>
            <person name="Kothe G.O."/>
            <person name="Jedd G."/>
            <person name="Mewes H.-W."/>
            <person name="Staben C."/>
            <person name="Marcotte E."/>
            <person name="Greenberg D."/>
            <person name="Roy A."/>
            <person name="Foley K."/>
            <person name="Naylor J."/>
            <person name="Stange-Thomann N."/>
            <person name="Barrett R."/>
            <person name="Gnerre S."/>
            <person name="Kamal M."/>
            <person name="Kamvysselis M."/>
            <person name="Mauceli E.W."/>
            <person name="Bielke C."/>
            <person name="Rudd S."/>
            <person name="Frishman D."/>
            <person name="Krystofova S."/>
            <person name="Rasmussen C."/>
            <person name="Metzenberg R.L."/>
            <person name="Perkins D.D."/>
            <person name="Kroken S."/>
            <person name="Cogoni C."/>
            <person name="Macino G."/>
            <person name="Catcheside D.E.A."/>
            <person name="Li W."/>
            <person name="Pratt R.J."/>
            <person name="Osmani S.A."/>
            <person name="DeSouza C.P.C."/>
            <person name="Glass N.L."/>
            <person name="Orbach M.J."/>
            <person name="Berglund J.A."/>
            <person name="Voelker R."/>
            <person name="Yarden O."/>
            <person name="Plamann M."/>
            <person name="Seiler S."/>
            <person name="Dunlap J.C."/>
            <person name="Radford A."/>
            <person name="Aramayo R."/>
            <person name="Natvig D.O."/>
            <person name="Alex L.A."/>
            <person name="Mannhaupt G."/>
            <person name="Ebbole D.J."/>
            <person name="Freitag M."/>
            <person name="Paulsen I."/>
            <person name="Sachs M.S."/>
            <person name="Lander E.S."/>
            <person name="Nusbaum C."/>
            <person name="Birren B.W."/>
        </authorList>
    </citation>
    <scope>NUCLEOTIDE SEQUENCE [LARGE SCALE GENOMIC DNA]</scope>
    <source>
        <strain>ATCC 24698 / 74-OR23-1A / CBS 708.71 / DSM 1257 / FGSC 987</strain>
    </source>
</reference>
<reference key="2">
    <citation type="journal article" date="2012" name="Biotechnol. Biofuels">
        <title>Production of four Neurospora crassa lytic polysaccharide monooxygenases in Pichia pastoris monitored by a fluorimetric assay.</title>
        <authorList>
            <person name="Kittl R."/>
            <person name="Kracher D."/>
            <person name="Burgstaller D."/>
            <person name="Haltrich D."/>
            <person name="Ludwig R."/>
        </authorList>
    </citation>
    <scope>INDUCTION</scope>
    <scope>SUBCELLULAR LOCATION</scope>
    <scope>FUNCTION</scope>
</reference>
<reference key="3">
    <citation type="journal article" date="2019" name="Int. J. Mol. Sci.">
        <title>Influence of lytic polysaccharide monooxygenase active site segments on activity and affinity.</title>
        <authorList>
            <person name="Laurent C.V.F.P."/>
            <person name="Sun P."/>
            <person name="Scheiblbrandner S."/>
            <person name="Csarman F."/>
            <person name="Cannazza P."/>
            <person name="Frommhagen M."/>
            <person name="van Berkel W.J.H."/>
            <person name="Oostenbrink C."/>
            <person name="Kabel M.A."/>
            <person name="Ludwig R."/>
        </authorList>
    </citation>
    <scope>FUNCTION</scope>
    <scope>CATALYTIC ACTIVITY</scope>
</reference>
<reference key="4">
    <citation type="journal article" date="2022" name="Appl. Environ. Microbiol.">
        <title>Comparison of six lytic polysaccharide monooxygenases from Thermothielavioides terrestris shows that functional variation underlies the multiplicity of LPMO genes in filamentous fungi.</title>
        <authorList>
            <person name="Tolgo M."/>
            <person name="Hegnar O.A."/>
            <person name="Oestby H."/>
            <person name="Varnai A."/>
            <person name="Vilaplana F."/>
            <person name="Eijsink V.G.H."/>
            <person name="Olsson L."/>
        </authorList>
    </citation>
    <scope>FUNCTION</scope>
    <scope>CATALYTIC ACTIVITY</scope>
</reference>
<reference evidence="11" key="5">
    <citation type="journal article" date="2015" name="Nat. Commun.">
        <title>Structural basis for cellobiose dehydrogenase action during oxidative cellulose degradation.</title>
        <authorList>
            <person name="Tan T.-C."/>
            <person name="Kracher D."/>
            <person name="Gandini R."/>
            <person name="Sygmund C."/>
            <person name="Kittl R."/>
            <person name="Haltrich D."/>
            <person name="Hallberg B.M."/>
            <person name="Ludwig R."/>
            <person name="Divne C."/>
        </authorList>
    </citation>
    <scope>X-RAY CRYSTALLOGRAPHY (1.10 ANGSTROMS) OF 18-231 IN COMPLEX WITH COPPER</scope>
    <scope>DISULFIDE BONDS</scope>
    <scope>COFACTOR</scope>
</reference>